<evidence type="ECO:0000250" key="1">
    <source>
        <dbReference type="UniProtKB" id="D4ATH2"/>
    </source>
</evidence>
<evidence type="ECO:0000255" key="2"/>
<evidence type="ECO:0000255" key="3">
    <source>
        <dbReference type="PROSITE-ProRule" id="PRU00498"/>
    </source>
</evidence>
<evidence type="ECO:0000255" key="4">
    <source>
        <dbReference type="PROSITE-ProRule" id="PRU01103"/>
    </source>
</evidence>
<evidence type="ECO:0000269" key="5">
    <source>
    </source>
</evidence>
<evidence type="ECO:0000269" key="6">
    <source>
    </source>
</evidence>
<evidence type="ECO:0000303" key="7">
    <source>
    </source>
</evidence>
<evidence type="ECO:0000305" key="8">
    <source>
    </source>
</evidence>
<organism>
    <name type="scientific">Fusarium sp</name>
    <dbReference type="NCBI Taxonomy" id="29916"/>
    <lineage>
        <taxon>Eukaryota</taxon>
        <taxon>Fungi</taxon>
        <taxon>Dikarya</taxon>
        <taxon>Ascomycota</taxon>
        <taxon>Pezizomycotina</taxon>
        <taxon>Sordariomycetes</taxon>
        <taxon>Hypocreomycetidae</taxon>
        <taxon>Hypocreales</taxon>
        <taxon>Nectriaceae</taxon>
        <taxon>Fusarium</taxon>
    </lineage>
</organism>
<comment type="function">
    <text evidence="5 6 8">Secreted aspartic protease; part of the gene cluster that mediates the biosynthesis of the mycotoxin lucilactaene and the lucilactaene-related compound NG-391 that act as cell cycle inhibitors with potent growth inhibitory activity against malarial parasites, moderate growth inhibitory activity against cancer cells, and no activity against bacteria and fungi (PubMed:32043422, PubMed:35484225). Within the cluster, LUC7 and LUC8 encode proteins which are not commonly involved in the biosynthesis of secondary metabolites and are not essential for lucilactaene biosynthesis (Probable).</text>
</comment>
<comment type="subcellular location">
    <subcellularLocation>
        <location evidence="1">Secreted</location>
    </subcellularLocation>
</comment>
<comment type="similarity">
    <text evidence="4">Belongs to the peptidase A1 family.</text>
</comment>
<accession>A0A6J4B484</accession>
<protein>
    <recommendedName>
        <fullName evidence="7">Secreted aspartic protease LUC8</fullName>
        <ecNumber evidence="1">3.4.23.-</ecNumber>
    </recommendedName>
    <alternativeName>
        <fullName evidence="7">Lucilactaene biosynthesis cluster protein 8</fullName>
    </alternativeName>
</protein>
<gene>
    <name evidence="7" type="primary">LUC8</name>
</gene>
<dbReference type="EC" id="3.4.23.-" evidence="1"/>
<dbReference type="EMBL" id="LC515193">
    <property type="protein sequence ID" value="BBQ09584.1"/>
    <property type="molecule type" value="Genomic_DNA"/>
</dbReference>
<dbReference type="SMR" id="A0A6J4B484"/>
<dbReference type="GlyCosmos" id="A0A6J4B484">
    <property type="glycosylation" value="8 sites, No reported glycans"/>
</dbReference>
<dbReference type="GO" id="GO:0005576">
    <property type="term" value="C:extracellular region"/>
    <property type="evidence" value="ECO:0007669"/>
    <property type="project" value="UniProtKB-SubCell"/>
</dbReference>
<dbReference type="GO" id="GO:0004190">
    <property type="term" value="F:aspartic-type endopeptidase activity"/>
    <property type="evidence" value="ECO:0007669"/>
    <property type="project" value="UniProtKB-KW"/>
</dbReference>
<dbReference type="GO" id="GO:0006508">
    <property type="term" value="P:proteolysis"/>
    <property type="evidence" value="ECO:0007669"/>
    <property type="project" value="UniProtKB-KW"/>
</dbReference>
<dbReference type="CDD" id="cd05471">
    <property type="entry name" value="pepsin_like"/>
    <property type="match status" value="1"/>
</dbReference>
<dbReference type="Gene3D" id="2.40.70.10">
    <property type="entry name" value="Acid Proteases"/>
    <property type="match status" value="2"/>
</dbReference>
<dbReference type="InterPro" id="IPR001461">
    <property type="entry name" value="Aspartic_peptidase_A1"/>
</dbReference>
<dbReference type="InterPro" id="IPR034164">
    <property type="entry name" value="Pepsin-like_dom"/>
</dbReference>
<dbReference type="InterPro" id="IPR033121">
    <property type="entry name" value="PEPTIDASE_A1"/>
</dbReference>
<dbReference type="InterPro" id="IPR021109">
    <property type="entry name" value="Peptidase_aspartic_dom_sf"/>
</dbReference>
<dbReference type="PANTHER" id="PTHR47966">
    <property type="entry name" value="BETA-SITE APP-CLEAVING ENZYME, ISOFORM A-RELATED"/>
    <property type="match status" value="1"/>
</dbReference>
<dbReference type="PANTHER" id="PTHR47966:SF51">
    <property type="entry name" value="BETA-SITE APP-CLEAVING ENZYME, ISOFORM A-RELATED"/>
    <property type="match status" value="1"/>
</dbReference>
<dbReference type="Pfam" id="PF00026">
    <property type="entry name" value="Asp"/>
    <property type="match status" value="1"/>
</dbReference>
<dbReference type="PRINTS" id="PR00792">
    <property type="entry name" value="PEPSIN"/>
</dbReference>
<dbReference type="SUPFAM" id="SSF50630">
    <property type="entry name" value="Acid proteases"/>
    <property type="match status" value="1"/>
</dbReference>
<dbReference type="PROSITE" id="PS51767">
    <property type="entry name" value="PEPTIDASE_A1"/>
    <property type="match status" value="1"/>
</dbReference>
<name>LUC8_FUSSX</name>
<proteinExistence type="inferred from homology"/>
<reference key="1">
    <citation type="journal article" date="2020" name="Biosci. Biotechnol. Biochem.">
        <title>Biosynthetic gene cluster identification and biological activity of lucilactaene from Fusarium sp. RK97-94.</title>
        <authorList>
            <person name="Kato S."/>
            <person name="Motoyama T."/>
            <person name="Futamura Y."/>
            <person name="Uramoto M."/>
            <person name="Nogawa T."/>
            <person name="Hayashi T."/>
            <person name="Hirota H."/>
            <person name="Tanaka A."/>
            <person name="Takahashi-Ando N."/>
            <person name="Kamakura T."/>
            <person name="Osada H."/>
        </authorList>
    </citation>
    <scope>NUCLEOTIDE SEQUENCE [GENOMIC DNA]</scope>
    <scope>FUNCTION</scope>
    <source>
        <strain>RK97-94</strain>
    </source>
</reference>
<reference key="2">
    <citation type="journal article" date="2022" name="J. Antibiot.">
        <title>Isolation of new lucilactaene derivatives from P450 monooxygenase and aldehyde dehydrogenase knockout Fusarium sp. RK97-94 strains and their biological activities.</title>
        <authorList>
            <person name="Abdelhakim I.A."/>
            <person name="Motoyama T."/>
            <person name="Nogawa T."/>
            <person name="Mahmud F.B."/>
            <person name="Futamura Y."/>
            <person name="Takahashi S."/>
            <person name="Osada H."/>
        </authorList>
    </citation>
    <scope>FUNCTION</scope>
</reference>
<sequence length="439" mass="47779">MMHAFHHLAVLLIGSLPASASTLPHPDGYRHVNGSCSKSVAVPAVWNGFGYLFNITVGTPPQELTMLSDWTWMSLFVRSGRCLNQYDPSLCLGTSGQTWFDERASTSFANTSLPQLSWPLTAFAPNFTVDYGTDDVCIGDLCSAGTVLQVSDFPYPGEGIPKVPFSGIFGMAPVTAGLNETFHPANYQAWKAGRLGSRVGWNSCAALASSDPCLGGEAKLVFGGTDSSLYDDDTLRIYEIQNPDWLSDAFYPLTPPRENYWTTPLTGSWILGTSEEESRNFAVPFSGSNGSNVTPLAVLDEGSEGLGAPLSLNAYNWLVDQVRGTLASNDTIEEIHAQGSSGFNTAEQNWYTVSCDDIDSYPELVYELNGHTNYTVPPQDYVTKLSDSSTCYLNINLWKYGRTEDGNAKVALLGLAFLKRLYVVLDFETQSFGLAPLSM</sequence>
<feature type="signal peptide" evidence="2">
    <location>
        <begin position="1"/>
        <end position="20"/>
    </location>
</feature>
<feature type="chain" id="PRO_5026878452" description="Secreted aspartic protease LUC8">
    <location>
        <begin position="21"/>
        <end position="439"/>
    </location>
</feature>
<feature type="domain" description="Peptidase A1" evidence="4">
    <location>
        <begin position="51"/>
        <end position="435"/>
    </location>
</feature>
<feature type="active site" evidence="4">
    <location>
        <position position="69"/>
    </location>
</feature>
<feature type="active site" evidence="4">
    <location>
        <position position="300"/>
    </location>
</feature>
<feature type="glycosylation site" description="N-linked (GlcNAc...) asparagine" evidence="3">
    <location>
        <position position="33"/>
    </location>
</feature>
<feature type="glycosylation site" description="N-linked (GlcNAc...) asparagine" evidence="3">
    <location>
        <position position="54"/>
    </location>
</feature>
<feature type="glycosylation site" description="N-linked (GlcNAc...) asparagine" evidence="3">
    <location>
        <position position="110"/>
    </location>
</feature>
<feature type="glycosylation site" description="N-linked (GlcNAc...) asparagine" evidence="3">
    <location>
        <position position="126"/>
    </location>
</feature>
<feature type="glycosylation site" description="N-linked (GlcNAc...) asparagine" evidence="3">
    <location>
        <position position="179"/>
    </location>
</feature>
<feature type="glycosylation site" description="N-linked (GlcNAc...) asparagine" evidence="3">
    <location>
        <position position="289"/>
    </location>
</feature>
<feature type="glycosylation site" description="N-linked (GlcNAc...) asparagine" evidence="3">
    <location>
        <position position="329"/>
    </location>
</feature>
<feature type="glycosylation site" description="N-linked (GlcNAc...) asparagine" evidence="3">
    <location>
        <position position="373"/>
    </location>
</feature>
<feature type="disulfide bond" evidence="4">
    <location>
        <begin position="355"/>
        <end position="391"/>
    </location>
</feature>
<keyword id="KW-0064">Aspartyl protease</keyword>
<keyword id="KW-1015">Disulfide bond</keyword>
<keyword id="KW-0325">Glycoprotein</keyword>
<keyword id="KW-0378">Hydrolase</keyword>
<keyword id="KW-0645">Protease</keyword>
<keyword id="KW-0964">Secreted</keyword>
<keyword id="KW-0732">Signal</keyword>